<name>NANA_SALTY</name>
<evidence type="ECO:0000255" key="1">
    <source>
        <dbReference type="HAMAP-Rule" id="MF_01237"/>
    </source>
</evidence>
<reference key="1">
    <citation type="journal article" date="2001" name="Nature">
        <title>Complete genome sequence of Salmonella enterica serovar Typhimurium LT2.</title>
        <authorList>
            <person name="McClelland M."/>
            <person name="Sanderson K.E."/>
            <person name="Spieth J."/>
            <person name="Clifton S.W."/>
            <person name="Latreille P."/>
            <person name="Courtney L."/>
            <person name="Porwollik S."/>
            <person name="Ali J."/>
            <person name="Dante M."/>
            <person name="Du F."/>
            <person name="Hou S."/>
            <person name="Layman D."/>
            <person name="Leonard S."/>
            <person name="Nguyen C."/>
            <person name="Scott K."/>
            <person name="Holmes A."/>
            <person name="Grewal N."/>
            <person name="Mulvaney E."/>
            <person name="Ryan E."/>
            <person name="Sun H."/>
            <person name="Florea L."/>
            <person name="Miller W."/>
            <person name="Stoneking T."/>
            <person name="Nhan M."/>
            <person name="Waterston R."/>
            <person name="Wilson R.K."/>
        </authorList>
    </citation>
    <scope>NUCLEOTIDE SEQUENCE [LARGE SCALE GENOMIC DNA]</scope>
    <source>
        <strain>LT2 / SGSC1412 / ATCC 700720</strain>
    </source>
</reference>
<protein>
    <recommendedName>
        <fullName evidence="1">N-acetylneuraminate lyase</fullName>
        <shortName evidence="1">NAL</shortName>
        <shortName evidence="1">Neu5Ac lyase</shortName>
        <ecNumber evidence="1">4.1.3.3</ecNumber>
    </recommendedName>
    <alternativeName>
        <fullName evidence="1">N-acetylneuraminate pyruvate-lyase</fullName>
    </alternativeName>
    <alternativeName>
        <fullName evidence="1">N-acetylneuraminic acid aldolase</fullName>
    </alternativeName>
    <alternativeName>
        <fullName evidence="1">Sialate lyase</fullName>
    </alternativeName>
    <alternativeName>
        <fullName evidence="1">Sialic acid aldolase</fullName>
    </alternativeName>
    <alternativeName>
        <fullName evidence="1">Sialic acid lyase</fullName>
    </alternativeName>
</protein>
<gene>
    <name evidence="1" type="primary">nanA</name>
    <name type="ordered locus">STM3339</name>
</gene>
<feature type="chain" id="PRO_0000103219" description="N-acetylneuraminate lyase">
    <location>
        <begin position="1"/>
        <end position="297"/>
    </location>
</feature>
<feature type="active site" description="Proton donor" evidence="1">
    <location>
        <position position="137"/>
    </location>
</feature>
<feature type="active site" description="Schiff-base intermediate with substrate" evidence="1">
    <location>
        <position position="165"/>
    </location>
</feature>
<feature type="binding site" evidence="1">
    <location>
        <position position="47"/>
    </location>
    <ligand>
        <name>aceneuramate</name>
        <dbReference type="ChEBI" id="CHEBI:173083"/>
    </ligand>
</feature>
<feature type="binding site" evidence="1">
    <location>
        <position position="48"/>
    </location>
    <ligand>
        <name>aceneuramate</name>
        <dbReference type="ChEBI" id="CHEBI:173083"/>
    </ligand>
</feature>
<feature type="binding site" evidence="1">
    <location>
        <position position="167"/>
    </location>
    <ligand>
        <name>aceneuramate</name>
        <dbReference type="ChEBI" id="CHEBI:173083"/>
    </ligand>
</feature>
<feature type="binding site" evidence="1">
    <location>
        <position position="189"/>
    </location>
    <ligand>
        <name>aceneuramate</name>
        <dbReference type="ChEBI" id="CHEBI:173083"/>
    </ligand>
</feature>
<feature type="binding site" evidence="1">
    <location>
        <position position="191"/>
    </location>
    <ligand>
        <name>aceneuramate</name>
        <dbReference type="ChEBI" id="CHEBI:173083"/>
    </ligand>
</feature>
<feature type="binding site" evidence="1">
    <location>
        <position position="192"/>
    </location>
    <ligand>
        <name>aceneuramate</name>
        <dbReference type="ChEBI" id="CHEBI:173083"/>
    </ligand>
</feature>
<feature type="binding site" evidence="1">
    <location>
        <position position="208"/>
    </location>
    <ligand>
        <name>aceneuramate</name>
        <dbReference type="ChEBI" id="CHEBI:173083"/>
    </ligand>
</feature>
<organism>
    <name type="scientific">Salmonella typhimurium (strain LT2 / SGSC1412 / ATCC 700720)</name>
    <dbReference type="NCBI Taxonomy" id="99287"/>
    <lineage>
        <taxon>Bacteria</taxon>
        <taxon>Pseudomonadati</taxon>
        <taxon>Pseudomonadota</taxon>
        <taxon>Gammaproteobacteria</taxon>
        <taxon>Enterobacterales</taxon>
        <taxon>Enterobacteriaceae</taxon>
        <taxon>Salmonella</taxon>
    </lineage>
</organism>
<proteinExistence type="inferred from homology"/>
<comment type="function">
    <text evidence="1">Catalyzes the reversible aldol cleavage of N-acetylneuraminic acid (sialic acid; Neu5Ac) to form pyruvate and N-acetylmannosamine (ManNAc) via a Schiff base intermediate.</text>
</comment>
<comment type="catalytic activity">
    <reaction evidence="1">
        <text>aceneuramate = aldehydo-N-acetyl-D-mannosamine + pyruvate</text>
        <dbReference type="Rhea" id="RHEA:23296"/>
        <dbReference type="ChEBI" id="CHEBI:15361"/>
        <dbReference type="ChEBI" id="CHEBI:17122"/>
        <dbReference type="ChEBI" id="CHEBI:173083"/>
        <dbReference type="EC" id="4.1.3.3"/>
    </reaction>
</comment>
<comment type="pathway">
    <text evidence="1">Amino-sugar metabolism; N-acetylneuraminate degradation; D-fructose 6-phosphate from N-acetylneuraminate: step 1/5.</text>
</comment>
<comment type="subunit">
    <text evidence="1">Homotetramer.</text>
</comment>
<comment type="subcellular location">
    <subcellularLocation>
        <location evidence="1">Cytoplasm</location>
    </subcellularLocation>
</comment>
<comment type="similarity">
    <text evidence="1">Belongs to the DapA family. NanA subfamily.</text>
</comment>
<accession>Q8ZLQ6</accession>
<sequence length="297" mass="32455">MAKALQGVMAALLTPFDHQQQLDSESLRRLVRFNIGQGIDGLYVGGSTGEAFVQSLAEREQVLEIVAEEAKGKITLIAHVGTVSTAESQQLASAAKRYGFDAVSAVTPFYYPFSFEEHCDHYRAIIDSADGLPMVVYNIPALSGVKLTLDQINTLVTLPGVSALKQTSGDLFQMEQIRRAHPDLVLYNGYDEIFASGLLAGADGGIGSTYNIMGWRYQGIVQALREGDVAKAQRLQTECNKVIDLLIKTGVFRGLKTVLHYMDVVSVPLCRKPFAPVDEKYLPALKALAQQLMEEKA</sequence>
<keyword id="KW-0119">Carbohydrate metabolism</keyword>
<keyword id="KW-0963">Cytoplasm</keyword>
<keyword id="KW-0456">Lyase</keyword>
<keyword id="KW-1185">Reference proteome</keyword>
<keyword id="KW-0704">Schiff base</keyword>
<dbReference type="EC" id="4.1.3.3" evidence="1"/>
<dbReference type="EMBL" id="AE006468">
    <property type="protein sequence ID" value="AAL22208.1"/>
    <property type="molecule type" value="Genomic_DNA"/>
</dbReference>
<dbReference type="RefSeq" id="NP_462249.1">
    <property type="nucleotide sequence ID" value="NC_003197.2"/>
</dbReference>
<dbReference type="RefSeq" id="WP_001029667.1">
    <property type="nucleotide sequence ID" value="NC_003197.2"/>
</dbReference>
<dbReference type="SMR" id="Q8ZLQ6"/>
<dbReference type="STRING" id="99287.STM3339"/>
<dbReference type="PaxDb" id="99287-STM3339"/>
<dbReference type="GeneID" id="1254862"/>
<dbReference type="KEGG" id="stm:STM3339"/>
<dbReference type="PATRIC" id="fig|99287.12.peg.3540"/>
<dbReference type="HOGENOM" id="CLU_049343_6_0_6"/>
<dbReference type="OMA" id="YWNAISA"/>
<dbReference type="PhylomeDB" id="Q8ZLQ6"/>
<dbReference type="BioCyc" id="SENT99287:STM3339-MONOMER"/>
<dbReference type="UniPathway" id="UPA00629">
    <property type="reaction ID" value="UER00680"/>
</dbReference>
<dbReference type="Proteomes" id="UP000001014">
    <property type="component" value="Chromosome"/>
</dbReference>
<dbReference type="GO" id="GO:0005829">
    <property type="term" value="C:cytosol"/>
    <property type="evidence" value="ECO:0000318"/>
    <property type="project" value="GO_Central"/>
</dbReference>
<dbReference type="GO" id="GO:0008747">
    <property type="term" value="F:N-acetylneuraminate lyase activity"/>
    <property type="evidence" value="ECO:0000318"/>
    <property type="project" value="GO_Central"/>
</dbReference>
<dbReference type="GO" id="GO:0005975">
    <property type="term" value="P:carbohydrate metabolic process"/>
    <property type="evidence" value="ECO:0007669"/>
    <property type="project" value="UniProtKB-UniRule"/>
</dbReference>
<dbReference type="GO" id="GO:0019262">
    <property type="term" value="P:N-acetylneuraminate catabolic process"/>
    <property type="evidence" value="ECO:0000318"/>
    <property type="project" value="GO_Central"/>
</dbReference>
<dbReference type="CDD" id="cd00954">
    <property type="entry name" value="NAL"/>
    <property type="match status" value="1"/>
</dbReference>
<dbReference type="FunFam" id="3.20.20.70:FF:000039">
    <property type="entry name" value="N-acetylneuraminate lyase"/>
    <property type="match status" value="1"/>
</dbReference>
<dbReference type="Gene3D" id="3.20.20.70">
    <property type="entry name" value="Aldolase class I"/>
    <property type="match status" value="1"/>
</dbReference>
<dbReference type="HAMAP" id="MF_01237">
    <property type="entry name" value="N_acetylneuram_lyase"/>
    <property type="match status" value="1"/>
</dbReference>
<dbReference type="InterPro" id="IPR013785">
    <property type="entry name" value="Aldolase_TIM"/>
</dbReference>
<dbReference type="InterPro" id="IPR002220">
    <property type="entry name" value="DapA-like"/>
</dbReference>
<dbReference type="InterPro" id="IPR005264">
    <property type="entry name" value="NanA"/>
</dbReference>
<dbReference type="InterPro" id="IPR020625">
    <property type="entry name" value="Schiff_base-form_aldolases_AS"/>
</dbReference>
<dbReference type="InterPro" id="IPR020624">
    <property type="entry name" value="Schiff_base-form_aldolases_CS"/>
</dbReference>
<dbReference type="NCBIfam" id="TIGR00683">
    <property type="entry name" value="nanA"/>
    <property type="match status" value="1"/>
</dbReference>
<dbReference type="NCBIfam" id="NF003164">
    <property type="entry name" value="PRK04147.1"/>
    <property type="match status" value="1"/>
</dbReference>
<dbReference type="PANTHER" id="PTHR42849">
    <property type="entry name" value="N-ACETYLNEURAMINATE LYASE"/>
    <property type="match status" value="1"/>
</dbReference>
<dbReference type="PANTHER" id="PTHR42849:SF1">
    <property type="entry name" value="N-ACETYLNEURAMINATE LYASE"/>
    <property type="match status" value="1"/>
</dbReference>
<dbReference type="Pfam" id="PF00701">
    <property type="entry name" value="DHDPS"/>
    <property type="match status" value="1"/>
</dbReference>
<dbReference type="PIRSF" id="PIRSF001365">
    <property type="entry name" value="DHDPS"/>
    <property type="match status" value="1"/>
</dbReference>
<dbReference type="PRINTS" id="PR00146">
    <property type="entry name" value="DHPICSNTHASE"/>
</dbReference>
<dbReference type="SMART" id="SM01130">
    <property type="entry name" value="DHDPS"/>
    <property type="match status" value="1"/>
</dbReference>
<dbReference type="SUPFAM" id="SSF51569">
    <property type="entry name" value="Aldolase"/>
    <property type="match status" value="1"/>
</dbReference>
<dbReference type="PROSITE" id="PS00665">
    <property type="entry name" value="DHDPS_1"/>
    <property type="match status" value="1"/>
</dbReference>
<dbReference type="PROSITE" id="PS00666">
    <property type="entry name" value="DHDPS_2"/>
    <property type="match status" value="1"/>
</dbReference>